<gene>
    <name evidence="11" type="primary">nhba</name>
    <name evidence="11" type="synonym">gna2132</name>
    <name evidence="14" type="ordered locus">NMB2132</name>
</gene>
<keyword id="KW-0130">Cell adhesion</keyword>
<keyword id="KW-0998">Cell outer membrane</keyword>
<keyword id="KW-0903">Direct protein sequencing</keyword>
<keyword id="KW-0238">DNA-binding</keyword>
<keyword id="KW-0358">Heparin-binding</keyword>
<keyword id="KW-1045">Host mitochondrion</keyword>
<keyword id="KW-0449">Lipoprotein</keyword>
<keyword id="KW-0472">Membrane</keyword>
<keyword id="KW-0564">Palmitate</keyword>
<keyword id="KW-1185">Reference proteome</keyword>
<keyword id="KW-0732">Signal</keyword>
<keyword id="KW-0843">Virulence</keyword>
<organism>
    <name type="scientific">Neisseria meningitidis serogroup B (strain ATCC BAA-335 / MC58)</name>
    <dbReference type="NCBI Taxonomy" id="122586"/>
    <lineage>
        <taxon>Bacteria</taxon>
        <taxon>Pseudomonadati</taxon>
        <taxon>Pseudomonadota</taxon>
        <taxon>Betaproteobacteria</taxon>
        <taxon>Neisseriales</taxon>
        <taxon>Neisseriaceae</taxon>
        <taxon>Neisseria</taxon>
    </lineage>
</organism>
<sequence length="488" mass="50554">MFKRSVIAMACIFALSACGGGGGGSPDVKSADTLSKPAAPVVSEKETEAKEDAPQAGSQGQGAPSAQGSQDMAAVSEENTGNGGAVTADNPKNEDEVAQNDMPQNAAGTDSSTPNHTPDPNMLAGNMENQATDAGESSQPANQPDMANAADGMQGDDPSAGGQNAGNTAAQGANQAGNNQAAGSSDPIPASNPAPANGGSNFGRVDLANGVLIDGPSQNITLTHCKGDSCSGNNFLDEEVQLKSEFEKLSDADKISNYKKDGKNDKFVGLVADSVQMKGINQYIIFYKPKPTSFARFRRSARSRRSLPAEMPLIPVNQADTLIVDGEAVSLTGHSGNIFAPEGNYRYLTYGAEKLPGGSYALRVQGEPAKGEMLAGAAVYNGEVLHFHTENGRPYPTRGRFAAKVDFGSKSVDGIIDSGDDLHMGTQKFKAAIDGNGFKGTWTENGSGDVSGKFYGPAGEEVAGKYSYRPTDAEKGGFGVFAGKKEQD</sequence>
<protein>
    <recommendedName>
        <fullName evidence="11">Neisserial heparin binding antigen</fullName>
        <shortName evidence="11">NHBA</shortName>
    </recommendedName>
    <alternativeName>
        <fullName evidence="11">Genome-derived Neisseria antigen 2132</fullName>
        <shortName evidence="11">GNA2132</shortName>
    </alternativeName>
    <component>
        <recommendedName>
            <fullName evidence="11">C2 fragment</fullName>
        </recommendedName>
    </component>
</protein>
<feature type="signal peptide" evidence="4">
    <location>
        <begin position="1"/>
        <end position="17"/>
    </location>
</feature>
<feature type="chain" id="PRO_5004287252" description="Neisserial heparin binding antigen" evidence="4">
    <location>
        <begin position="18"/>
        <end position="488"/>
    </location>
</feature>
<feature type="chain" id="PRO_0000456787" description="C2 fragment" evidence="13">
    <location>
        <begin position="293"/>
        <end position="488"/>
    </location>
</feature>
<feature type="region of interest" description="Disordered" evidence="5">
    <location>
        <begin position="21"/>
        <end position="201"/>
    </location>
</feature>
<feature type="region of interest" description="C1 fragment" evidence="7">
    <location>
        <begin position="306"/>
        <end position="488"/>
    </location>
</feature>
<feature type="short sequence motif" description="Arg-rich motif" evidence="6">
    <location>
        <begin position="296"/>
        <end position="306"/>
    </location>
</feature>
<feature type="compositionally biased region" description="Basic and acidic residues" evidence="5">
    <location>
        <begin position="43"/>
        <end position="53"/>
    </location>
</feature>
<feature type="compositionally biased region" description="Low complexity" evidence="5">
    <location>
        <begin position="54"/>
        <end position="70"/>
    </location>
</feature>
<feature type="compositionally biased region" description="Polar residues" evidence="5">
    <location>
        <begin position="101"/>
        <end position="118"/>
    </location>
</feature>
<feature type="compositionally biased region" description="Polar residues" evidence="5">
    <location>
        <begin position="127"/>
        <end position="142"/>
    </location>
</feature>
<feature type="compositionally biased region" description="Low complexity" evidence="5">
    <location>
        <begin position="160"/>
        <end position="183"/>
    </location>
</feature>
<feature type="site" description="Cleavage by NalP" evidence="6">
    <location>
        <begin position="292"/>
        <end position="293"/>
    </location>
</feature>
<feature type="site" description="Cleavage by human kallikrein-1" evidence="10">
    <location>
        <begin position="303"/>
        <end position="304"/>
    </location>
</feature>
<feature type="site" description="Cleavage by human lactoferrin" evidence="6">
    <location>
        <begin position="305"/>
        <end position="306"/>
    </location>
</feature>
<feature type="lipid moiety-binding region" description="N-palmitoyl cysteine" evidence="4">
    <location>
        <position position="18"/>
    </location>
</feature>
<feature type="lipid moiety-binding region" description="S-diacylglycerol cysteine" evidence="4">
    <location>
        <position position="18"/>
    </location>
</feature>
<feature type="mutagenesis site" description="No longer binds heparin. No longer binds human cells." evidence="6 8">
    <original>RFRRSARSRRS</original>
    <variation>GGGGGGGGGGG</variation>
    <location>
        <begin position="296"/>
        <end position="306"/>
    </location>
</feature>
<feature type="mutagenesis site" description="No longer binds heparin. No longer binds human cells. Not digested by human kallikrein." evidence="6 8 10">
    <location>
        <begin position="296"/>
        <end position="306"/>
    </location>
</feature>
<proteinExistence type="evidence at protein level"/>
<comment type="function">
    <text evidence="6 8 9">A major human immunogenic protein detected in patients recovering from meningitidis, where it induces bactericidal antibodies. Binds heparin and heparan sulfate proteoglycan in vitro via the Arg-rich motif. Heparin-binding to this protein protects bacteria against killing by bactericidal antibodies (serum killing) (PubMed:20133713). Binds to human cells via the Arg-rich region; binding may require the intact protein as protein fragments do not bind to human cells. Protein binding to human cells is abolished by treatment with heparinase III but not chondroitinase ABC (PubMed:27780200). The bacteria binds a number of human extracellular sialyated and/or sulfated glycans via this protein, including chondroitin sulfate (KD=5.2 nM), heparin (KD=52 nM) and ganglioside GT3 (KD=210 nM). The recombinant protein binds DNA non-specifically (PubMed:29695781).</text>
</comment>
<comment type="function">
    <text evidence="1">Plays a role in extracellular-DNA (eDNA) mediated biofilm formation. In strain MC58 eDNA stimulates biofilm formation. When NHBA is not processed by NalP there is an increase in positively charged, NHBA- and IgA-derived DNA-binding peptides on the cell surface, resulting in increased DNA-binding peptides and increased biofilm formation.</text>
</comment>
<comment type="function">
    <text evidence="7">[C2 fragment] Localizes to host mitochondria when applied to the apical side of human endothelial cell layers, where it induces production of reactive oxygen species which lead to increased permeability of host endothelial cells. The C1 fragment (which lacks the first 14 residues of C2) does not have this effect. It is not known if this occurs during Neisseria infections.</text>
</comment>
<comment type="subunit">
    <text evidence="3">The C-terminal beta-barrel forms a monomer.</text>
</comment>
<comment type="subcellular location">
    <molecule>Neisserial heparin binding antigen</molecule>
    <subcellularLocation>
        <location evidence="4 6">Cell outer membrane</location>
        <topology evidence="4">Lipid-anchor</topology>
    </subcellularLocation>
    <subcellularLocation>
        <location evidence="13">Cell surface</location>
    </subcellularLocation>
</comment>
<comment type="subcellular location">
    <molecule>C2 fragment</molecule>
    <subcellularLocation>
        <location evidence="7">Host mitochondrion</location>
    </subcellularLocation>
    <text evidence="7 8">This fragment is internalized by human cells.</text>
</comment>
<comment type="domain">
    <text evidence="2 12">The signal peptide guides the autotransporter protein to the periplasm where it is lipid-anchored (presumably) in the outer membrane. Insertion of the C-terminal translocator domain in the outer membrane forms a hydrophilic pore for the translocation of the passenger domain to the bacterial cell surface, where subsequent cleavage by NalP or a host protease liberates C2.</text>
</comment>
<comment type="domain">
    <text evidence="3">The C-terminus forms a beta-barrel with 8 anti-parallel strands.</text>
</comment>
<comment type="PTM">
    <text evidence="6 8 10">Cleaved in vivo by the Neisserial phase-variable autotransporter/serine protease NalP to give 2 fragments. The N-terminus remains in the cell outer membrane while the 22 kDa C-terminus (beginning on Ser-293) is soluble; this soluble fragment is called C2 (PubMed:20133713, PubMed:27780200). Cleaved in vitro by human lactoferrin (LTF, between Arg-305 and Ser-306), this fragment is called C1. Cleavage by NalP or lactoferrin does not alter killing of Neisseria by bactericidal antibodies in vitro (PubMed:20133713). Recombinant and cell surface protein is cleaved by human saliva kallikrein (KLK1) between Ser-303 and Arg-304; in saliva kallikrein is more active on NHBA than lactoferrin. Human plasma kallikrein (KLKB1) cleaves in a similar manner to KLK1 (PubMed:31369555).</text>
</comment>
<comment type="disruption phenotype">
    <text evidence="6 8 9">Loss of heparin protection against bacterial killing by bactericidal antibodies (tested in an unencapsulated Y2220 siaD deletion) (PubMed:20133713). 2.8 (strain MC58) to 4.1 fold (strain UK013) decrease of binding to human cells depending on the bacterial strain (PubMed:27780200). Loss of binding of bacteria to 61 glycans, with an increase of binding to 41 others (in an unencapsulated MC58 siaD deletion strain); thus NHBA may mask binding of some glycans (PubMed:29695781).</text>
</comment>
<comment type="biotechnology">
    <text evidence="6">A good vaccine protein, it induces bactericidal antibodies in humans.</text>
</comment>
<comment type="similarity">
    <text evidence="12">Belongs to the NHBA family.</text>
</comment>
<comment type="online information" name="Bexsero meningococcal group B Vaccine (4CMenB)">
    <link uri="https://www.ema.europa.eu/en/medicines/human/EPAR/bexsero"/>
</comment>
<name>NHBA_NEIMB</name>
<dbReference type="EMBL" id="AE002098">
    <property type="protein sequence ID" value="AAF42440.1"/>
    <property type="molecule type" value="Genomic_DNA"/>
</dbReference>
<dbReference type="RefSeq" id="NP_275117.1">
    <property type="nucleotide sequence ID" value="NC_003112.2"/>
</dbReference>
<dbReference type="RefSeq" id="WP_002248796.1">
    <property type="nucleotide sequence ID" value="NC_003112.2"/>
</dbReference>
<dbReference type="SMR" id="Q7DD37"/>
<dbReference type="STRING" id="122586.NMB2132"/>
<dbReference type="PaxDb" id="122586-NMB2132"/>
<dbReference type="KEGG" id="nme:NMB2132"/>
<dbReference type="PATRIC" id="fig|122586.8.peg.2716"/>
<dbReference type="HOGENOM" id="CLU_643773_0_0_4"/>
<dbReference type="InParanoid" id="Q7DD37"/>
<dbReference type="OrthoDB" id="5673741at2"/>
<dbReference type="Proteomes" id="UP000000425">
    <property type="component" value="Chromosome"/>
</dbReference>
<dbReference type="GO" id="GO:0009279">
    <property type="term" value="C:cell outer membrane"/>
    <property type="evidence" value="ECO:0000314"/>
    <property type="project" value="UniProtKB"/>
</dbReference>
<dbReference type="GO" id="GO:0009986">
    <property type="term" value="C:cell surface"/>
    <property type="evidence" value="ECO:0007669"/>
    <property type="project" value="UniProtKB-SubCell"/>
</dbReference>
<dbReference type="GO" id="GO:0033650">
    <property type="term" value="C:host cell mitochondrion"/>
    <property type="evidence" value="ECO:0007669"/>
    <property type="project" value="UniProtKB-SubCell"/>
</dbReference>
<dbReference type="GO" id="GO:0035374">
    <property type="term" value="F:chondroitin sulfate binding"/>
    <property type="evidence" value="ECO:0000314"/>
    <property type="project" value="UniProtKB"/>
</dbReference>
<dbReference type="GO" id="GO:0003677">
    <property type="term" value="F:DNA binding"/>
    <property type="evidence" value="ECO:0007669"/>
    <property type="project" value="UniProtKB-KW"/>
</dbReference>
<dbReference type="GO" id="GO:0008201">
    <property type="term" value="F:heparin binding"/>
    <property type="evidence" value="ECO:0000314"/>
    <property type="project" value="UniProtKB"/>
</dbReference>
<dbReference type="GO" id="GO:0007155">
    <property type="term" value="P:cell adhesion"/>
    <property type="evidence" value="ECO:0007669"/>
    <property type="project" value="UniProtKB-KW"/>
</dbReference>
<dbReference type="Gene3D" id="2.40.160.90">
    <property type="match status" value="1"/>
</dbReference>
<dbReference type="Gene3D" id="6.20.50.70">
    <property type="match status" value="1"/>
</dbReference>
<dbReference type="InterPro" id="IPR011250">
    <property type="entry name" value="OMP/PagP_b-brl"/>
</dbReference>
<dbReference type="InterPro" id="IPR001677">
    <property type="entry name" value="TbpB_B_D"/>
</dbReference>
<dbReference type="Pfam" id="PF01298">
    <property type="entry name" value="TbpB_B_D"/>
    <property type="match status" value="1"/>
</dbReference>
<dbReference type="SUPFAM" id="SSF56925">
    <property type="entry name" value="OMPA-like"/>
    <property type="match status" value="1"/>
</dbReference>
<dbReference type="PROSITE" id="PS51257">
    <property type="entry name" value="PROKAR_LIPOPROTEIN"/>
    <property type="match status" value="1"/>
</dbReference>
<evidence type="ECO:0000250" key="1">
    <source>
        <dbReference type="UniProtKB" id="E6MZW7"/>
    </source>
</evidence>
<evidence type="ECO:0000250" key="2">
    <source>
        <dbReference type="UniProtKB" id="P09790"/>
    </source>
</evidence>
<evidence type="ECO:0000250" key="3">
    <source>
        <dbReference type="UniProtKB" id="Q9JPP1"/>
    </source>
</evidence>
<evidence type="ECO:0000255" key="4">
    <source>
        <dbReference type="PROSITE-ProRule" id="PRU00303"/>
    </source>
</evidence>
<evidence type="ECO:0000256" key="5">
    <source>
        <dbReference type="SAM" id="MobiDB-lite"/>
    </source>
</evidence>
<evidence type="ECO:0000269" key="6">
    <source>
    </source>
</evidence>
<evidence type="ECO:0000269" key="7">
    <source>
    </source>
</evidence>
<evidence type="ECO:0000269" key="8">
    <source>
    </source>
</evidence>
<evidence type="ECO:0000269" key="9">
    <source>
    </source>
</evidence>
<evidence type="ECO:0000269" key="10">
    <source>
    </source>
</evidence>
<evidence type="ECO:0000303" key="11">
    <source>
    </source>
</evidence>
<evidence type="ECO:0000305" key="12"/>
<evidence type="ECO:0000305" key="13">
    <source>
    </source>
</evidence>
<evidence type="ECO:0000312" key="14">
    <source>
        <dbReference type="EMBL" id="AAF42440.1"/>
    </source>
</evidence>
<reference evidence="14" key="1">
    <citation type="journal article" date="2000" name="Science">
        <title>Complete genome sequence of Neisseria meningitidis serogroup B strain MC58.</title>
        <authorList>
            <person name="Tettelin H."/>
            <person name="Saunders N.J."/>
            <person name="Heidelberg J.F."/>
            <person name="Jeffries A.C."/>
            <person name="Nelson K.E."/>
            <person name="Eisen J.A."/>
            <person name="Ketchum K.A."/>
            <person name="Hood D.W."/>
            <person name="Peden J.F."/>
            <person name="Dodson R.J."/>
            <person name="Nelson W.C."/>
            <person name="Gwinn M.L."/>
            <person name="DeBoy R.T."/>
            <person name="Peterson J.D."/>
            <person name="Hickey E.K."/>
            <person name="Haft D.H."/>
            <person name="Salzberg S.L."/>
            <person name="White O."/>
            <person name="Fleischmann R.D."/>
            <person name="Dougherty B.A."/>
            <person name="Mason T.M."/>
            <person name="Ciecko A."/>
            <person name="Parksey D.S."/>
            <person name="Blair E."/>
            <person name="Cittone H."/>
            <person name="Clark E.B."/>
            <person name="Cotton M.D."/>
            <person name="Utterback T.R."/>
            <person name="Khouri H.M."/>
            <person name="Qin H."/>
            <person name="Vamathevan J.J."/>
            <person name="Gill J."/>
            <person name="Scarlato V."/>
            <person name="Masignani V."/>
            <person name="Pizza M."/>
            <person name="Grandi G."/>
            <person name="Sun L."/>
            <person name="Smith H.O."/>
            <person name="Fraser C.M."/>
            <person name="Moxon E.R."/>
            <person name="Rappuoli R."/>
            <person name="Venter J.C."/>
        </authorList>
    </citation>
    <scope>NUCLEOTIDE SEQUENCE [LARGE SCALE GENOMIC DNA]</scope>
    <source>
        <strain>ATCC BAA-335 / MC58</strain>
    </source>
</reference>
<reference key="2">
    <citation type="journal article" date="2010" name="Proc. Natl. Acad. Sci. U.S.A.">
        <title>Neisseria meningitidis GNA2132, a heparin-binding protein that induces protective immunity in humans.</title>
        <authorList>
            <person name="Serruto D."/>
            <person name="Spadafina T."/>
            <person name="Ciucchi L."/>
            <person name="Lewis L.A."/>
            <person name="Ram S."/>
            <person name="Tontini M."/>
            <person name="Santini L."/>
            <person name="Biolchi A."/>
            <person name="Seib K.L."/>
            <person name="Giuliani M.M."/>
            <person name="Donnelly J.J."/>
            <person name="Berti F."/>
            <person name="Savino S."/>
            <person name="Scarselli M."/>
            <person name="Costantino P."/>
            <person name="Kroll J.S."/>
            <person name="O'Dwyer C."/>
            <person name="Qiu J."/>
            <person name="Plaut A.G."/>
            <person name="Moxon R."/>
            <person name="Rappuoli R."/>
            <person name="Pizza M."/>
            <person name="Arico B."/>
        </authorList>
    </citation>
    <scope>PROTEIN SEQUENCE OF 293 AND 306-313</scope>
    <scope>FUNCTION</scope>
    <scope>INTERACTION WITH HEPARIN</scope>
    <scope>SUBCELLULAR LOCATION</scope>
    <scope>PROTEOLYTIC CLEAVAGE BY NALP</scope>
    <scope>DISRUPTION PHENOTYPE</scope>
    <scope>ANTIGENIC</scope>
    <scope>VACCINE</scope>
    <scope>MUTAGENESIS OF 296-ARG--SER-306</scope>
    <source>
        <strain>ATCC BAA-335 / MC58</strain>
        <strain>Y2220</strain>
    </source>
</reference>
<reference key="3">
    <citation type="journal article" date="2014" name="Cell. Microbiol.">
        <title>The C2 fragment from Neisseria meningitidis antigen NHBA increases endothelial permeability by destabilizing adherens junctions.</title>
        <authorList>
            <person name="Casellato A."/>
            <person name="Rossi Paccani S."/>
            <person name="Barrile R."/>
            <person name="Bossi F."/>
            <person name="Ciucchi L."/>
            <person name="Codolo G."/>
            <person name="Pizza M."/>
            <person name="Arico B."/>
            <person name="de Bernard M."/>
        </authorList>
    </citation>
    <scope>FUNCTION OF C2 FRAGMENT</scope>
    <scope>HOST SUBCELLULAR LOCATION</scope>
    <source>
        <strain>ATCC BAA-335 / MC58</strain>
    </source>
</reference>
<reference key="4">
    <citation type="journal article" date="2016" name="PLoS ONE">
        <title>Neisserial Heparin Binding Antigen (NHBA) Contributes to the Adhesion of Neisseria meningitidis to Human Epithelial Cells.</title>
        <authorList>
            <person name="Vacca I."/>
            <person name="Del Tordello E."/>
            <person name="Gasperini G."/>
            <person name="Pezzicoli A."/>
            <person name="Di Fede M."/>
            <person name="Rossi Paccani S."/>
            <person name="Marchi S."/>
            <person name="Mubaiwa T.D."/>
            <person name="Hartley-Tassell L.E."/>
            <person name="Jennings M.P."/>
            <person name="Seib K.L."/>
            <person name="Masignani V."/>
            <person name="Pizza M."/>
            <person name="Serruto D."/>
            <person name="Arico B."/>
            <person name="Delany I."/>
        </authorList>
    </citation>
    <scope>FUNCTION AS AN ADHESIN</scope>
    <scope>DISRUPTION PHENOTYPE</scope>
    <scope>MUTAGENESIS OF 296-ARG--SER-306</scope>
    <source>
        <strain>8047</strain>
        <strain>ATCC BAA-335 / MC58</strain>
        <strain>M10713</strain>
        <strain>NGH38</strain>
        <strain>UK013</strain>
    </source>
</reference>
<reference key="5">
    <citation type="journal article" date="2018" name="Sci. Rep.">
        <title>The Bexsero Neisseria meningitidis serogroup B vaccine antigen NHBA is a high-affinity chondroitin sulfate binding protein.</title>
        <authorList>
            <person name="Mubaiwa T.D."/>
            <person name="Hartley-Tassell L.E."/>
            <person name="Semchenko E.A."/>
            <person name="Day C.J."/>
            <person name="Jennings M.P."/>
            <person name="Seib K.L."/>
        </authorList>
    </citation>
    <scope>GLYCAN-BINDING</scope>
    <scope>DNA-BINDING</scope>
    <scope>DISRUPTION PHENOTYPE</scope>
    <source>
        <strain>ATCC BAA-335 / MC58</strain>
    </source>
</reference>
<reference key="6">
    <citation type="journal article" date="2019" name="PLoS ONE">
        <title>NHBA is processed by kallikrein from human saliva.</title>
        <authorList>
            <person name="Pantano E."/>
            <person name="Marchi S."/>
            <person name="Biagini M."/>
            <person name="Di Fede M."/>
            <person name="Nardi Dei V."/>
            <person name="Rossi Paccani S."/>
            <person name="Pizza M."/>
            <person name="Cartocci E."/>
        </authorList>
    </citation>
    <scope>PROTEOLYTIC CLEAVAGE BY HUMAN KALLIKREIN-1</scope>
    <scope>MUTAGENESIS OF 296-ARG--SER-306</scope>
    <source>
        <strain>ATCC BAA-335 / MC58</strain>
        <strain>NZ98/254</strain>
    </source>
</reference>
<accession>Q7DD37</accession>